<dbReference type="EMBL" id="CP000628">
    <property type="protein sequence ID" value="ACM26269.1"/>
    <property type="molecule type" value="Genomic_DNA"/>
</dbReference>
<dbReference type="RefSeq" id="WP_007702186.1">
    <property type="nucleotide sequence ID" value="NC_011985.1"/>
</dbReference>
<dbReference type="SMR" id="B9JDR8"/>
<dbReference type="STRING" id="311403.Arad_1958"/>
<dbReference type="GeneID" id="86848156"/>
<dbReference type="KEGG" id="ara:Arad_1958"/>
<dbReference type="eggNOG" id="COG0081">
    <property type="taxonomic scope" value="Bacteria"/>
</dbReference>
<dbReference type="HOGENOM" id="CLU_062853_0_0_5"/>
<dbReference type="Proteomes" id="UP000001600">
    <property type="component" value="Chromosome 1"/>
</dbReference>
<dbReference type="GO" id="GO:0022625">
    <property type="term" value="C:cytosolic large ribosomal subunit"/>
    <property type="evidence" value="ECO:0007669"/>
    <property type="project" value="TreeGrafter"/>
</dbReference>
<dbReference type="GO" id="GO:0019843">
    <property type="term" value="F:rRNA binding"/>
    <property type="evidence" value="ECO:0007669"/>
    <property type="project" value="UniProtKB-UniRule"/>
</dbReference>
<dbReference type="GO" id="GO:0003735">
    <property type="term" value="F:structural constituent of ribosome"/>
    <property type="evidence" value="ECO:0007669"/>
    <property type="project" value="InterPro"/>
</dbReference>
<dbReference type="GO" id="GO:0000049">
    <property type="term" value="F:tRNA binding"/>
    <property type="evidence" value="ECO:0007669"/>
    <property type="project" value="UniProtKB-KW"/>
</dbReference>
<dbReference type="GO" id="GO:0006417">
    <property type="term" value="P:regulation of translation"/>
    <property type="evidence" value="ECO:0007669"/>
    <property type="project" value="UniProtKB-KW"/>
</dbReference>
<dbReference type="GO" id="GO:0006412">
    <property type="term" value="P:translation"/>
    <property type="evidence" value="ECO:0007669"/>
    <property type="project" value="UniProtKB-UniRule"/>
</dbReference>
<dbReference type="CDD" id="cd00403">
    <property type="entry name" value="Ribosomal_L1"/>
    <property type="match status" value="1"/>
</dbReference>
<dbReference type="FunFam" id="3.40.50.790:FF:000001">
    <property type="entry name" value="50S ribosomal protein L1"/>
    <property type="match status" value="1"/>
</dbReference>
<dbReference type="Gene3D" id="3.30.190.20">
    <property type="match status" value="1"/>
</dbReference>
<dbReference type="Gene3D" id="3.40.50.790">
    <property type="match status" value="1"/>
</dbReference>
<dbReference type="HAMAP" id="MF_01318_B">
    <property type="entry name" value="Ribosomal_uL1_B"/>
    <property type="match status" value="1"/>
</dbReference>
<dbReference type="InterPro" id="IPR005878">
    <property type="entry name" value="Ribosom_uL1_bac-type"/>
</dbReference>
<dbReference type="InterPro" id="IPR002143">
    <property type="entry name" value="Ribosomal_uL1"/>
</dbReference>
<dbReference type="InterPro" id="IPR023674">
    <property type="entry name" value="Ribosomal_uL1-like"/>
</dbReference>
<dbReference type="InterPro" id="IPR028364">
    <property type="entry name" value="Ribosomal_uL1/biogenesis"/>
</dbReference>
<dbReference type="InterPro" id="IPR016095">
    <property type="entry name" value="Ribosomal_uL1_3-a/b-sand"/>
</dbReference>
<dbReference type="InterPro" id="IPR023673">
    <property type="entry name" value="Ribosomal_uL1_CS"/>
</dbReference>
<dbReference type="NCBIfam" id="TIGR01169">
    <property type="entry name" value="rplA_bact"/>
    <property type="match status" value="1"/>
</dbReference>
<dbReference type="PANTHER" id="PTHR36427">
    <property type="entry name" value="54S RIBOSOMAL PROTEIN L1, MITOCHONDRIAL"/>
    <property type="match status" value="1"/>
</dbReference>
<dbReference type="PANTHER" id="PTHR36427:SF3">
    <property type="entry name" value="LARGE RIBOSOMAL SUBUNIT PROTEIN UL1M"/>
    <property type="match status" value="1"/>
</dbReference>
<dbReference type="Pfam" id="PF00687">
    <property type="entry name" value="Ribosomal_L1"/>
    <property type="match status" value="1"/>
</dbReference>
<dbReference type="PIRSF" id="PIRSF002155">
    <property type="entry name" value="Ribosomal_L1"/>
    <property type="match status" value="1"/>
</dbReference>
<dbReference type="SUPFAM" id="SSF56808">
    <property type="entry name" value="Ribosomal protein L1"/>
    <property type="match status" value="1"/>
</dbReference>
<dbReference type="PROSITE" id="PS01199">
    <property type="entry name" value="RIBOSOMAL_L1"/>
    <property type="match status" value="1"/>
</dbReference>
<comment type="function">
    <text evidence="1">Binds directly to 23S rRNA. The L1 stalk is quite mobile in the ribosome, and is involved in E site tRNA release.</text>
</comment>
<comment type="function">
    <text evidence="1">Protein L1 is also a translational repressor protein, it controls the translation of the L11 operon by binding to its mRNA.</text>
</comment>
<comment type="subunit">
    <text evidence="1">Part of the 50S ribosomal subunit.</text>
</comment>
<comment type="similarity">
    <text evidence="1">Belongs to the universal ribosomal protein uL1 family.</text>
</comment>
<sequence length="232" mass="24259">MVAKRIQKIREGVDPTKLYALTQAIGMVKERAIAKFDETIEVSMNLGVDPRHADQMVRGVVNLPNGTGRSVRVAVFARGAKADEAKAAGADIVGAEELVEIVQGGKIDFDRCIATPDMMPLVGRLGKVLGPRGMMPNPKVGTVTMDVKGAVEASKGGAVEFRVEKAGIVHAGIGKASFDAKALEENIRAFADAVIKAKPAGAKGNYVKRVAISSTMGPGVKIELASVTAPNA</sequence>
<keyword id="KW-0678">Repressor</keyword>
<keyword id="KW-0687">Ribonucleoprotein</keyword>
<keyword id="KW-0689">Ribosomal protein</keyword>
<keyword id="KW-0694">RNA-binding</keyword>
<keyword id="KW-0699">rRNA-binding</keyword>
<keyword id="KW-0810">Translation regulation</keyword>
<keyword id="KW-0820">tRNA-binding</keyword>
<accession>B9JDR8</accession>
<gene>
    <name evidence="1" type="primary">rplA</name>
    <name type="ordered locus">Arad_1958</name>
</gene>
<proteinExistence type="inferred from homology"/>
<reference key="1">
    <citation type="journal article" date="2009" name="J. Bacteriol.">
        <title>Genome sequences of three Agrobacterium biovars help elucidate the evolution of multichromosome genomes in bacteria.</title>
        <authorList>
            <person name="Slater S.C."/>
            <person name="Goldman B.S."/>
            <person name="Goodner B."/>
            <person name="Setubal J.C."/>
            <person name="Farrand S.K."/>
            <person name="Nester E.W."/>
            <person name="Burr T.J."/>
            <person name="Banta L."/>
            <person name="Dickerman A.W."/>
            <person name="Paulsen I."/>
            <person name="Otten L."/>
            <person name="Suen G."/>
            <person name="Welch R."/>
            <person name="Almeida N.F."/>
            <person name="Arnold F."/>
            <person name="Burton O.T."/>
            <person name="Du Z."/>
            <person name="Ewing A."/>
            <person name="Godsy E."/>
            <person name="Heisel S."/>
            <person name="Houmiel K.L."/>
            <person name="Jhaveri J."/>
            <person name="Lu J."/>
            <person name="Miller N.M."/>
            <person name="Norton S."/>
            <person name="Chen Q."/>
            <person name="Phoolcharoen W."/>
            <person name="Ohlin V."/>
            <person name="Ondrusek D."/>
            <person name="Pride N."/>
            <person name="Stricklin S.L."/>
            <person name="Sun J."/>
            <person name="Wheeler C."/>
            <person name="Wilson L."/>
            <person name="Zhu H."/>
            <person name="Wood D.W."/>
        </authorList>
    </citation>
    <scope>NUCLEOTIDE SEQUENCE [LARGE SCALE GENOMIC DNA]</scope>
    <source>
        <strain>K84 / ATCC BAA-868</strain>
    </source>
</reference>
<evidence type="ECO:0000255" key="1">
    <source>
        <dbReference type="HAMAP-Rule" id="MF_01318"/>
    </source>
</evidence>
<evidence type="ECO:0000305" key="2"/>
<organism>
    <name type="scientific">Rhizobium rhizogenes (strain K84 / ATCC BAA-868)</name>
    <name type="common">Agrobacterium radiobacter</name>
    <dbReference type="NCBI Taxonomy" id="311403"/>
    <lineage>
        <taxon>Bacteria</taxon>
        <taxon>Pseudomonadati</taxon>
        <taxon>Pseudomonadota</taxon>
        <taxon>Alphaproteobacteria</taxon>
        <taxon>Hyphomicrobiales</taxon>
        <taxon>Rhizobiaceae</taxon>
        <taxon>Rhizobium/Agrobacterium group</taxon>
        <taxon>Rhizobium</taxon>
    </lineage>
</organism>
<name>RL1_RHIR8</name>
<protein>
    <recommendedName>
        <fullName evidence="1">Large ribosomal subunit protein uL1</fullName>
    </recommendedName>
    <alternativeName>
        <fullName evidence="2">50S ribosomal protein L1</fullName>
    </alternativeName>
</protein>
<feature type="chain" id="PRO_1000165650" description="Large ribosomal subunit protein uL1">
    <location>
        <begin position="1"/>
        <end position="232"/>
    </location>
</feature>